<accession>O95780</accession>
<accession>B3KU64</accession>
<accession>E9PFJ5</accession>
<accession>Q96JV9</accession>
<evidence type="ECO:0000255" key="1">
    <source>
        <dbReference type="PROSITE-ProRule" id="PRU00042"/>
    </source>
</evidence>
<evidence type="ECO:0000255" key="2">
    <source>
        <dbReference type="PROSITE-ProRule" id="PRU00119"/>
    </source>
</evidence>
<evidence type="ECO:0000269" key="3">
    <source>
    </source>
</evidence>
<evidence type="ECO:0000303" key="4">
    <source>
    </source>
</evidence>
<evidence type="ECO:0000305" key="5"/>
<name>ZN682_HUMAN</name>
<keyword id="KW-0025">Alternative splicing</keyword>
<keyword id="KW-0238">DNA-binding</keyword>
<keyword id="KW-0479">Metal-binding</keyword>
<keyword id="KW-0539">Nucleus</keyword>
<keyword id="KW-1267">Proteomics identification</keyword>
<keyword id="KW-1185">Reference proteome</keyword>
<keyword id="KW-0677">Repeat</keyword>
<keyword id="KW-0804">Transcription</keyword>
<keyword id="KW-0805">Transcription regulation</keyword>
<keyword id="KW-0862">Zinc</keyword>
<keyword id="KW-0863">Zinc-finger</keyword>
<organism>
    <name type="scientific">Homo sapiens</name>
    <name type="common">Human</name>
    <dbReference type="NCBI Taxonomy" id="9606"/>
    <lineage>
        <taxon>Eukaryota</taxon>
        <taxon>Metazoa</taxon>
        <taxon>Chordata</taxon>
        <taxon>Craniata</taxon>
        <taxon>Vertebrata</taxon>
        <taxon>Euteleostomi</taxon>
        <taxon>Mammalia</taxon>
        <taxon>Eutheria</taxon>
        <taxon>Euarchontoglires</taxon>
        <taxon>Primates</taxon>
        <taxon>Haplorrhini</taxon>
        <taxon>Catarrhini</taxon>
        <taxon>Hominidae</taxon>
        <taxon>Homo</taxon>
    </lineage>
</organism>
<sequence length="498" mass="58361">MELLTFRDVTIEFSLEEWEFLNPAQQSLYRKVMLENYRNLVSLGLTVSKPELISRLEQRQEPWNVKRHETIAKPPAMSSHYTEDLLPEQCMQDSFQKVILRRYGSCGLEDLHLRKDGENVGECKDQKEIYNGLNQCLSTLPSKIFPYNKCVKVFSKSSNLNRENIRHTTEKLFKCMQCGKVFKSHSGLSYHKIIHTEEKLCICEECGKTFKWFSYLTKHKRIHTGEKPYKCEECGKAFNWCSSLTKHKRIHTGEKPYKCEECGKAFHWCSPFVRHKKIHTGEKPYTCEDCGRAFNRHSHLTKHKTIHTGKKPYKCKECGKAFNHCSLLTIHERTHTGEKPYKCEECGKAFNSSSILTEHKVIHSGEKPYKCEKCDKVFKRFSYLTKHKRIHTGEKPYKCEECGKAFNWSSILTEHKRIHTGEKPYNCEECGKAFNRCSHLTRHKKIHTAVKRYKCEECGKAFKRCSHLNEHKRVQRGEKSCKYKKCGEAFNHCSNLTT</sequence>
<proteinExistence type="evidence at protein level"/>
<feature type="chain" id="PRO_0000234001" description="Zinc finger protein 682">
    <location>
        <begin position="1"/>
        <end position="498"/>
    </location>
</feature>
<feature type="domain" description="KRAB" evidence="2">
    <location>
        <begin position="4"/>
        <end position="75"/>
    </location>
</feature>
<feature type="zinc finger region" description="C2H2-type 1" evidence="1">
    <location>
        <begin position="173"/>
        <end position="195"/>
    </location>
</feature>
<feature type="zinc finger region" description="C2H2-type 2" evidence="1">
    <location>
        <begin position="201"/>
        <end position="223"/>
    </location>
</feature>
<feature type="zinc finger region" description="C2H2-type 3" evidence="1">
    <location>
        <begin position="229"/>
        <end position="251"/>
    </location>
</feature>
<feature type="zinc finger region" description="C2H2-type 4" evidence="1">
    <location>
        <begin position="257"/>
        <end position="279"/>
    </location>
</feature>
<feature type="zinc finger region" description="C2H2-type 5" evidence="1">
    <location>
        <begin position="285"/>
        <end position="307"/>
    </location>
</feature>
<feature type="zinc finger region" description="C2H2-type 6" evidence="1">
    <location>
        <begin position="313"/>
        <end position="335"/>
    </location>
</feature>
<feature type="zinc finger region" description="C2H2-type 7" evidence="1">
    <location>
        <begin position="341"/>
        <end position="363"/>
    </location>
</feature>
<feature type="zinc finger region" description="C2H2-type 8" evidence="1">
    <location>
        <begin position="369"/>
        <end position="391"/>
    </location>
</feature>
<feature type="zinc finger region" description="C2H2-type 9" evidence="1">
    <location>
        <begin position="397"/>
        <end position="419"/>
    </location>
</feature>
<feature type="zinc finger region" description="C2H2-type 10" evidence="1">
    <location>
        <begin position="425"/>
        <end position="447"/>
    </location>
</feature>
<feature type="zinc finger region" description="C2H2-type 11; degenerate" evidence="1">
    <location>
        <begin position="453"/>
        <end position="475"/>
    </location>
</feature>
<feature type="splice variant" id="VSP_018166" description="In isoform 2." evidence="4">
    <location>
        <begin position="1"/>
        <end position="76"/>
    </location>
</feature>
<feature type="splice variant" id="VSP_044563" description="In isoform 3." evidence="4">
    <location>
        <begin position="1"/>
        <end position="32"/>
    </location>
</feature>
<feature type="sequence variant" id="VAR_052891" description="In dbSNP:rs7255165.">
    <original>V</original>
    <variation>M</variation>
    <location>
        <position position="65"/>
    </location>
</feature>
<feature type="sequence variant" id="VAR_052892" description="In dbSNP:rs2075090." evidence="3">
    <original>T</original>
    <variation>I</variation>
    <location>
        <position position="209"/>
    </location>
</feature>
<feature type="sequence variant" id="VAR_052893" description="In dbSNP:rs17679334.">
    <original>V</original>
    <variation>I</variation>
    <location>
        <position position="450"/>
    </location>
</feature>
<dbReference type="EMBL" id="AK027845">
    <property type="protein sequence ID" value="BAB55408.1"/>
    <property type="status" value="ALT_FRAME"/>
    <property type="molecule type" value="mRNA"/>
</dbReference>
<dbReference type="EMBL" id="AK096571">
    <property type="protein sequence ID" value="BAG53326.1"/>
    <property type="molecule type" value="mRNA"/>
</dbReference>
<dbReference type="EMBL" id="DA787253">
    <property type="status" value="NOT_ANNOTATED_CDS"/>
    <property type="molecule type" value="mRNA"/>
</dbReference>
<dbReference type="EMBL" id="AC006539">
    <property type="protein sequence ID" value="AAD14472.1"/>
    <property type="molecule type" value="Genomic_DNA"/>
</dbReference>
<dbReference type="CCDS" id="CCDS42533.1">
    <molecule id="O95780-1"/>
</dbReference>
<dbReference type="CCDS" id="CCDS42534.1">
    <molecule id="O95780-3"/>
</dbReference>
<dbReference type="RefSeq" id="NP_001070817.1">
    <molecule id="O95780-3"/>
    <property type="nucleotide sequence ID" value="NM_001077349.1"/>
</dbReference>
<dbReference type="RefSeq" id="NP_149973.1">
    <molecule id="O95780-1"/>
    <property type="nucleotide sequence ID" value="NM_033196.3"/>
</dbReference>
<dbReference type="RefSeq" id="XP_016882945.1">
    <property type="nucleotide sequence ID" value="XM_017027456.1"/>
</dbReference>
<dbReference type="RefSeq" id="XP_047295612.1">
    <molecule id="O95780-2"/>
    <property type="nucleotide sequence ID" value="XM_047439656.1"/>
</dbReference>
<dbReference type="RefSeq" id="XP_047295613.1">
    <molecule id="O95780-2"/>
    <property type="nucleotide sequence ID" value="XM_047439657.1"/>
</dbReference>
<dbReference type="RefSeq" id="XP_047295614.1">
    <molecule id="O95780-2"/>
    <property type="nucleotide sequence ID" value="XM_047439658.1"/>
</dbReference>
<dbReference type="RefSeq" id="XP_054178537.1">
    <molecule id="O95780-2"/>
    <property type="nucleotide sequence ID" value="XM_054322562.1"/>
</dbReference>
<dbReference type="RefSeq" id="XP_054178538.1">
    <molecule id="O95780-2"/>
    <property type="nucleotide sequence ID" value="XM_054322563.1"/>
</dbReference>
<dbReference type="RefSeq" id="XP_054178539.1">
    <molecule id="O95780-2"/>
    <property type="nucleotide sequence ID" value="XM_054322564.1"/>
</dbReference>
<dbReference type="SMR" id="O95780"/>
<dbReference type="BioGRID" id="124796">
    <property type="interactions" value="4"/>
</dbReference>
<dbReference type="FunCoup" id="O95780">
    <property type="interactions" value="4"/>
</dbReference>
<dbReference type="IntAct" id="O95780">
    <property type="interactions" value="2"/>
</dbReference>
<dbReference type="STRING" id="9606.ENSP00000380351"/>
<dbReference type="iPTMnet" id="O95780"/>
<dbReference type="PhosphoSitePlus" id="O95780"/>
<dbReference type="BioMuta" id="ZNF682"/>
<dbReference type="jPOST" id="O95780"/>
<dbReference type="MassIVE" id="O95780"/>
<dbReference type="PaxDb" id="9606-ENSP00000380351"/>
<dbReference type="PeptideAtlas" id="O95780"/>
<dbReference type="ProteomicsDB" id="20119"/>
<dbReference type="ProteomicsDB" id="51041">
    <molecule id="O95780-1"/>
</dbReference>
<dbReference type="ProteomicsDB" id="51042">
    <molecule id="O95780-2"/>
</dbReference>
<dbReference type="Antibodypedia" id="8003">
    <property type="antibodies" value="158 antibodies from 23 providers"/>
</dbReference>
<dbReference type="DNASU" id="91120"/>
<dbReference type="Ensembl" id="ENST00000358523.9">
    <molecule id="O95780-3"/>
    <property type="protein sequence ID" value="ENSP00000351324.5"/>
    <property type="gene ID" value="ENSG00000197124.12"/>
</dbReference>
<dbReference type="Ensembl" id="ENST00000397162.5">
    <molecule id="O95780-3"/>
    <property type="protein sequence ID" value="ENSP00000380348.1"/>
    <property type="gene ID" value="ENSG00000197124.12"/>
</dbReference>
<dbReference type="Ensembl" id="ENST00000397165.7">
    <molecule id="O95780-1"/>
    <property type="protein sequence ID" value="ENSP00000380351.1"/>
    <property type="gene ID" value="ENSG00000197124.12"/>
</dbReference>
<dbReference type="Ensembl" id="ENST00000595736.1">
    <molecule id="O95780-2"/>
    <property type="protein sequence ID" value="ENSP00000471717.1"/>
    <property type="gene ID" value="ENSG00000197124.12"/>
</dbReference>
<dbReference type="GeneID" id="91120"/>
<dbReference type="KEGG" id="hsa:91120"/>
<dbReference type="MANE-Select" id="ENST00000397165.7">
    <property type="protein sequence ID" value="ENSP00000380351.1"/>
    <property type="RefSeq nucleotide sequence ID" value="NM_033196.3"/>
    <property type="RefSeq protein sequence ID" value="NP_149973.1"/>
</dbReference>
<dbReference type="UCSC" id="uc002noo.3">
    <molecule id="O95780-1"/>
    <property type="organism name" value="human"/>
</dbReference>
<dbReference type="AGR" id="HGNC:28857"/>
<dbReference type="CTD" id="91120"/>
<dbReference type="GeneCards" id="ZNF682"/>
<dbReference type="HGNC" id="HGNC:28857">
    <property type="gene designation" value="ZNF682"/>
</dbReference>
<dbReference type="HPA" id="ENSG00000197124">
    <property type="expression patterns" value="Low tissue specificity"/>
</dbReference>
<dbReference type="neXtProt" id="NX_O95780"/>
<dbReference type="OpenTargets" id="ENSG00000197124"/>
<dbReference type="PharmGKB" id="PA142670483"/>
<dbReference type="VEuPathDB" id="HostDB:ENSG00000197124"/>
<dbReference type="eggNOG" id="KOG1721">
    <property type="taxonomic scope" value="Eukaryota"/>
</dbReference>
<dbReference type="GeneTree" id="ENSGT00940000154251"/>
<dbReference type="HOGENOM" id="CLU_002678_0_2_1"/>
<dbReference type="InParanoid" id="O95780"/>
<dbReference type="OMA" id="CCSHLTR"/>
<dbReference type="OrthoDB" id="6591996at2759"/>
<dbReference type="PAN-GO" id="O95780">
    <property type="GO annotations" value="3 GO annotations based on evolutionary models"/>
</dbReference>
<dbReference type="PhylomeDB" id="O95780"/>
<dbReference type="TreeFam" id="TF342117"/>
<dbReference type="PathwayCommons" id="O95780"/>
<dbReference type="Reactome" id="R-HSA-212436">
    <property type="pathway name" value="Generic Transcription Pathway"/>
</dbReference>
<dbReference type="SignaLink" id="O95780"/>
<dbReference type="BioGRID-ORCS" id="91120">
    <property type="hits" value="16 hits in 1172 CRISPR screens"/>
</dbReference>
<dbReference type="ChiTaRS" id="ZNF682">
    <property type="organism name" value="human"/>
</dbReference>
<dbReference type="GenomeRNAi" id="91120"/>
<dbReference type="Pharos" id="O95780">
    <property type="development level" value="Tdark"/>
</dbReference>
<dbReference type="PRO" id="PR:O95780"/>
<dbReference type="Proteomes" id="UP000005640">
    <property type="component" value="Chromosome 19"/>
</dbReference>
<dbReference type="RNAct" id="O95780">
    <property type="molecule type" value="protein"/>
</dbReference>
<dbReference type="Bgee" id="ENSG00000197124">
    <property type="expression patterns" value="Expressed in oocyte and 159 other cell types or tissues"/>
</dbReference>
<dbReference type="ExpressionAtlas" id="O95780">
    <property type="expression patterns" value="baseline and differential"/>
</dbReference>
<dbReference type="GO" id="GO:0005634">
    <property type="term" value="C:nucleus"/>
    <property type="evidence" value="ECO:0007669"/>
    <property type="project" value="UniProtKB-SubCell"/>
</dbReference>
<dbReference type="GO" id="GO:0000981">
    <property type="term" value="F:DNA-binding transcription factor activity, RNA polymerase II-specific"/>
    <property type="evidence" value="ECO:0000318"/>
    <property type="project" value="GO_Central"/>
</dbReference>
<dbReference type="GO" id="GO:0000978">
    <property type="term" value="F:RNA polymerase II cis-regulatory region sequence-specific DNA binding"/>
    <property type="evidence" value="ECO:0000318"/>
    <property type="project" value="GO_Central"/>
</dbReference>
<dbReference type="GO" id="GO:0008270">
    <property type="term" value="F:zinc ion binding"/>
    <property type="evidence" value="ECO:0007669"/>
    <property type="project" value="UniProtKB-KW"/>
</dbReference>
<dbReference type="GO" id="GO:0006355">
    <property type="term" value="P:regulation of DNA-templated transcription"/>
    <property type="evidence" value="ECO:0000318"/>
    <property type="project" value="GO_Central"/>
</dbReference>
<dbReference type="CDD" id="cd07765">
    <property type="entry name" value="KRAB_A-box"/>
    <property type="match status" value="1"/>
</dbReference>
<dbReference type="FunFam" id="3.30.160.60:FF:002472">
    <property type="match status" value="1"/>
</dbReference>
<dbReference type="FunFam" id="3.30.160.60:FF:000524">
    <property type="entry name" value="Zinc finger protein 155"/>
    <property type="match status" value="1"/>
</dbReference>
<dbReference type="FunFam" id="3.30.160.60:FF:000034">
    <property type="entry name" value="zinc finger protein 25"/>
    <property type="match status" value="3"/>
</dbReference>
<dbReference type="FunFam" id="3.30.160.60:FF:001868">
    <property type="entry name" value="Zinc finger protein 264"/>
    <property type="match status" value="1"/>
</dbReference>
<dbReference type="FunFam" id="3.30.160.60:FF:001882">
    <property type="entry name" value="Zinc finger protein 473"/>
    <property type="match status" value="1"/>
</dbReference>
<dbReference type="FunFam" id="3.30.160.60:FF:000238">
    <property type="entry name" value="Zinc finger protein 485"/>
    <property type="match status" value="1"/>
</dbReference>
<dbReference type="FunFam" id="3.30.160.60:FF:000362">
    <property type="entry name" value="Zinc finger protein 606"/>
    <property type="match status" value="1"/>
</dbReference>
<dbReference type="FunFam" id="3.30.160.60:FF:000213">
    <property type="entry name" value="Zinc finger protein 624"/>
    <property type="match status" value="1"/>
</dbReference>
<dbReference type="FunFam" id="3.30.160.60:FF:000176">
    <property type="entry name" value="zinc finger protein 70"/>
    <property type="match status" value="1"/>
</dbReference>
<dbReference type="Gene3D" id="6.10.140.140">
    <property type="match status" value="1"/>
</dbReference>
<dbReference type="Gene3D" id="3.30.160.60">
    <property type="entry name" value="Classic Zinc Finger"/>
    <property type="match status" value="11"/>
</dbReference>
<dbReference type="InterPro" id="IPR001909">
    <property type="entry name" value="KRAB"/>
</dbReference>
<dbReference type="InterPro" id="IPR036051">
    <property type="entry name" value="KRAB_dom_sf"/>
</dbReference>
<dbReference type="InterPro" id="IPR050826">
    <property type="entry name" value="Krueppel_C2H2_ZnFinger"/>
</dbReference>
<dbReference type="InterPro" id="IPR036236">
    <property type="entry name" value="Znf_C2H2_sf"/>
</dbReference>
<dbReference type="InterPro" id="IPR013087">
    <property type="entry name" value="Znf_C2H2_type"/>
</dbReference>
<dbReference type="PANTHER" id="PTHR24377">
    <property type="entry name" value="IP01015P-RELATED"/>
    <property type="match status" value="1"/>
</dbReference>
<dbReference type="Pfam" id="PF01352">
    <property type="entry name" value="KRAB"/>
    <property type="match status" value="1"/>
</dbReference>
<dbReference type="Pfam" id="PF00096">
    <property type="entry name" value="zf-C2H2"/>
    <property type="match status" value="9"/>
</dbReference>
<dbReference type="SMART" id="SM00349">
    <property type="entry name" value="KRAB"/>
    <property type="match status" value="1"/>
</dbReference>
<dbReference type="SMART" id="SM00355">
    <property type="entry name" value="ZnF_C2H2"/>
    <property type="match status" value="11"/>
</dbReference>
<dbReference type="SUPFAM" id="SSF57667">
    <property type="entry name" value="beta-beta-alpha zinc fingers"/>
    <property type="match status" value="8"/>
</dbReference>
<dbReference type="SUPFAM" id="SSF109640">
    <property type="entry name" value="KRAB domain (Kruppel-associated box)"/>
    <property type="match status" value="1"/>
</dbReference>
<dbReference type="PROSITE" id="PS50805">
    <property type="entry name" value="KRAB"/>
    <property type="match status" value="1"/>
</dbReference>
<dbReference type="PROSITE" id="PS00028">
    <property type="entry name" value="ZINC_FINGER_C2H2_1"/>
    <property type="match status" value="10"/>
</dbReference>
<dbReference type="PROSITE" id="PS50157">
    <property type="entry name" value="ZINC_FINGER_C2H2_2"/>
    <property type="match status" value="11"/>
</dbReference>
<comment type="function">
    <text>May be involved in transcriptional regulation.</text>
</comment>
<comment type="subcellular location">
    <subcellularLocation>
        <location evidence="5">Nucleus</location>
    </subcellularLocation>
</comment>
<comment type="alternative products">
    <event type="alternative splicing"/>
    <isoform>
        <id>O95780-1</id>
        <name>1</name>
        <sequence type="displayed"/>
    </isoform>
    <isoform>
        <id>O95780-2</id>
        <name>2</name>
        <sequence type="described" ref="VSP_018166"/>
    </isoform>
    <isoform>
        <id>O95780-3</id>
        <name>3</name>
        <sequence type="described" ref="VSP_044563"/>
    </isoform>
</comment>
<comment type="similarity">
    <text evidence="5">Belongs to the krueppel C2H2-type zinc-finger protein family.</text>
</comment>
<comment type="sequence caution" evidence="5">
    <conflict type="frameshift">
        <sequence resource="EMBL-CDS" id="BAB55408"/>
    </conflict>
</comment>
<protein>
    <recommendedName>
        <fullName>Zinc finger protein 682</fullName>
    </recommendedName>
</protein>
<reference key="1">
    <citation type="journal article" date="2004" name="Nat. Genet.">
        <title>Complete sequencing and characterization of 21,243 full-length human cDNAs.</title>
        <authorList>
            <person name="Ota T."/>
            <person name="Suzuki Y."/>
            <person name="Nishikawa T."/>
            <person name="Otsuki T."/>
            <person name="Sugiyama T."/>
            <person name="Irie R."/>
            <person name="Wakamatsu A."/>
            <person name="Hayashi K."/>
            <person name="Sato H."/>
            <person name="Nagai K."/>
            <person name="Kimura K."/>
            <person name="Makita H."/>
            <person name="Sekine M."/>
            <person name="Obayashi M."/>
            <person name="Nishi T."/>
            <person name="Shibahara T."/>
            <person name="Tanaka T."/>
            <person name="Ishii S."/>
            <person name="Yamamoto J."/>
            <person name="Saito K."/>
            <person name="Kawai Y."/>
            <person name="Isono Y."/>
            <person name="Nakamura Y."/>
            <person name="Nagahari K."/>
            <person name="Murakami K."/>
            <person name="Yasuda T."/>
            <person name="Iwayanagi T."/>
            <person name="Wagatsuma M."/>
            <person name="Shiratori A."/>
            <person name="Sudo H."/>
            <person name="Hosoiri T."/>
            <person name="Kaku Y."/>
            <person name="Kodaira H."/>
            <person name="Kondo H."/>
            <person name="Sugawara M."/>
            <person name="Takahashi M."/>
            <person name="Kanda K."/>
            <person name="Yokoi T."/>
            <person name="Furuya T."/>
            <person name="Kikkawa E."/>
            <person name="Omura Y."/>
            <person name="Abe K."/>
            <person name="Kamihara K."/>
            <person name="Katsuta N."/>
            <person name="Sato K."/>
            <person name="Tanikawa M."/>
            <person name="Yamazaki M."/>
            <person name="Ninomiya K."/>
            <person name="Ishibashi T."/>
            <person name="Yamashita H."/>
            <person name="Murakawa K."/>
            <person name="Fujimori K."/>
            <person name="Tanai H."/>
            <person name="Kimata M."/>
            <person name="Watanabe M."/>
            <person name="Hiraoka S."/>
            <person name="Chiba Y."/>
            <person name="Ishida S."/>
            <person name="Ono Y."/>
            <person name="Takiguchi S."/>
            <person name="Watanabe S."/>
            <person name="Yosida M."/>
            <person name="Hotuta T."/>
            <person name="Kusano J."/>
            <person name="Kanehori K."/>
            <person name="Takahashi-Fujii A."/>
            <person name="Hara H."/>
            <person name="Tanase T.-O."/>
            <person name="Nomura Y."/>
            <person name="Togiya S."/>
            <person name="Komai F."/>
            <person name="Hara R."/>
            <person name="Takeuchi K."/>
            <person name="Arita M."/>
            <person name="Imose N."/>
            <person name="Musashino K."/>
            <person name="Yuuki H."/>
            <person name="Oshima A."/>
            <person name="Sasaki N."/>
            <person name="Aotsuka S."/>
            <person name="Yoshikawa Y."/>
            <person name="Matsunawa H."/>
            <person name="Ichihara T."/>
            <person name="Shiohata N."/>
            <person name="Sano S."/>
            <person name="Moriya S."/>
            <person name="Momiyama H."/>
            <person name="Satoh N."/>
            <person name="Takami S."/>
            <person name="Terashima Y."/>
            <person name="Suzuki O."/>
            <person name="Nakagawa S."/>
            <person name="Senoh A."/>
            <person name="Mizoguchi H."/>
            <person name="Goto Y."/>
            <person name="Shimizu F."/>
            <person name="Wakebe H."/>
            <person name="Hishigaki H."/>
            <person name="Watanabe T."/>
            <person name="Sugiyama A."/>
            <person name="Takemoto M."/>
            <person name="Kawakami B."/>
            <person name="Yamazaki M."/>
            <person name="Watanabe K."/>
            <person name="Kumagai A."/>
            <person name="Itakura S."/>
            <person name="Fukuzumi Y."/>
            <person name="Fujimori Y."/>
            <person name="Komiyama M."/>
            <person name="Tashiro H."/>
            <person name="Tanigami A."/>
            <person name="Fujiwara T."/>
            <person name="Ono T."/>
            <person name="Yamada K."/>
            <person name="Fujii Y."/>
            <person name="Ozaki K."/>
            <person name="Hirao M."/>
            <person name="Ohmori Y."/>
            <person name="Kawabata A."/>
            <person name="Hikiji T."/>
            <person name="Kobatake N."/>
            <person name="Inagaki H."/>
            <person name="Ikema Y."/>
            <person name="Okamoto S."/>
            <person name="Okitani R."/>
            <person name="Kawakami T."/>
            <person name="Noguchi S."/>
            <person name="Itoh T."/>
            <person name="Shigeta K."/>
            <person name="Senba T."/>
            <person name="Matsumura K."/>
            <person name="Nakajima Y."/>
            <person name="Mizuno T."/>
            <person name="Morinaga M."/>
            <person name="Sasaki M."/>
            <person name="Togashi T."/>
            <person name="Oyama M."/>
            <person name="Hata H."/>
            <person name="Watanabe M."/>
            <person name="Komatsu T."/>
            <person name="Mizushima-Sugano J."/>
            <person name="Satoh T."/>
            <person name="Shirai Y."/>
            <person name="Takahashi Y."/>
            <person name="Nakagawa K."/>
            <person name="Okumura K."/>
            <person name="Nagase T."/>
            <person name="Nomura N."/>
            <person name="Kikuchi H."/>
            <person name="Masuho Y."/>
            <person name="Yamashita R."/>
            <person name="Nakai K."/>
            <person name="Yada T."/>
            <person name="Nakamura Y."/>
            <person name="Ohara O."/>
            <person name="Isogai T."/>
            <person name="Sugano S."/>
        </authorList>
    </citation>
    <scope>NUCLEOTIDE SEQUENCE [LARGE SCALE MRNA] (ISOFORMS 1 AND 2)</scope>
    <scope>NUCLEOTIDE SEQUENCE [LARGE SCALE MRNA] OF 1-137 (ISOFORM 3)</scope>
    <scope>VARIANT ILE-209</scope>
    <source>
        <tissue>Brain</tissue>
        <tissue>Fetal brain</tissue>
        <tissue>Placenta</tissue>
    </source>
</reference>
<reference key="2">
    <citation type="journal article" date="2004" name="Nature">
        <title>The DNA sequence and biology of human chromosome 19.</title>
        <authorList>
            <person name="Grimwood J."/>
            <person name="Gordon L.A."/>
            <person name="Olsen A.S."/>
            <person name="Terry A."/>
            <person name="Schmutz J."/>
            <person name="Lamerdin J.E."/>
            <person name="Hellsten U."/>
            <person name="Goodstein D."/>
            <person name="Couronne O."/>
            <person name="Tran-Gyamfi M."/>
            <person name="Aerts A."/>
            <person name="Altherr M."/>
            <person name="Ashworth L."/>
            <person name="Bajorek E."/>
            <person name="Black S."/>
            <person name="Branscomb E."/>
            <person name="Caenepeel S."/>
            <person name="Carrano A.V."/>
            <person name="Caoile C."/>
            <person name="Chan Y.M."/>
            <person name="Christensen M."/>
            <person name="Cleland C.A."/>
            <person name="Copeland A."/>
            <person name="Dalin E."/>
            <person name="Dehal P."/>
            <person name="Denys M."/>
            <person name="Detter J.C."/>
            <person name="Escobar J."/>
            <person name="Flowers D."/>
            <person name="Fotopulos D."/>
            <person name="Garcia C."/>
            <person name="Georgescu A.M."/>
            <person name="Glavina T."/>
            <person name="Gomez M."/>
            <person name="Gonzales E."/>
            <person name="Groza M."/>
            <person name="Hammon N."/>
            <person name="Hawkins T."/>
            <person name="Haydu L."/>
            <person name="Ho I."/>
            <person name="Huang W."/>
            <person name="Israni S."/>
            <person name="Jett J."/>
            <person name="Kadner K."/>
            <person name="Kimball H."/>
            <person name="Kobayashi A."/>
            <person name="Larionov V."/>
            <person name="Leem S.-H."/>
            <person name="Lopez F."/>
            <person name="Lou Y."/>
            <person name="Lowry S."/>
            <person name="Malfatti S."/>
            <person name="Martinez D."/>
            <person name="McCready P.M."/>
            <person name="Medina C."/>
            <person name="Morgan J."/>
            <person name="Nelson K."/>
            <person name="Nolan M."/>
            <person name="Ovcharenko I."/>
            <person name="Pitluck S."/>
            <person name="Pollard M."/>
            <person name="Popkie A.P."/>
            <person name="Predki P."/>
            <person name="Quan G."/>
            <person name="Ramirez L."/>
            <person name="Rash S."/>
            <person name="Retterer J."/>
            <person name="Rodriguez A."/>
            <person name="Rogers S."/>
            <person name="Salamov A."/>
            <person name="Salazar A."/>
            <person name="She X."/>
            <person name="Smith D."/>
            <person name="Slezak T."/>
            <person name="Solovyev V."/>
            <person name="Thayer N."/>
            <person name="Tice H."/>
            <person name="Tsai M."/>
            <person name="Ustaszewska A."/>
            <person name="Vo N."/>
            <person name="Wagner M."/>
            <person name="Wheeler J."/>
            <person name="Wu K."/>
            <person name="Xie G."/>
            <person name="Yang J."/>
            <person name="Dubchak I."/>
            <person name="Furey T.S."/>
            <person name="DeJong P."/>
            <person name="Dickson M."/>
            <person name="Gordon D."/>
            <person name="Eichler E.E."/>
            <person name="Pennacchio L.A."/>
            <person name="Richardson P."/>
            <person name="Stubbs L."/>
            <person name="Rokhsar D.S."/>
            <person name="Myers R.M."/>
            <person name="Rubin E.M."/>
            <person name="Lucas S.M."/>
        </authorList>
    </citation>
    <scope>NUCLEOTIDE SEQUENCE [LARGE SCALE GENOMIC DNA]</scope>
</reference>
<gene>
    <name type="primary">ZNF682</name>
</gene>